<dbReference type="EMBL" id="CU329670">
    <property type="protein sequence ID" value="CAA91965.1"/>
    <property type="molecule type" value="Genomic_DNA"/>
</dbReference>
<dbReference type="PIR" id="T38138">
    <property type="entry name" value="S62591"/>
</dbReference>
<dbReference type="RefSeq" id="NP_594503.1">
    <property type="nucleotide sequence ID" value="NM_001019932.2"/>
</dbReference>
<dbReference type="PDB" id="5B04">
    <property type="method" value="X-ray"/>
    <property type="resolution" value="2.99 A"/>
    <property type="chains" value="G/H=1-467"/>
</dbReference>
<dbReference type="PDB" id="6JLY">
    <property type="method" value="X-ray"/>
    <property type="resolution" value="3.50 A"/>
    <property type="chains" value="G/H=1-467"/>
</dbReference>
<dbReference type="PDB" id="6JLZ">
    <property type="method" value="X-ray"/>
    <property type="resolution" value="3.35 A"/>
    <property type="chains" value="G/H=1-467"/>
</dbReference>
<dbReference type="PDBsum" id="5B04"/>
<dbReference type="PDBsum" id="6JLY"/>
<dbReference type="PDBsum" id="6JLZ"/>
<dbReference type="SMR" id="Q09924"/>
<dbReference type="BioGRID" id="278541">
    <property type="interactions" value="4"/>
</dbReference>
<dbReference type="DIP" id="DIP-61961N"/>
<dbReference type="FunCoup" id="Q09924">
    <property type="interactions" value="566"/>
</dbReference>
<dbReference type="IntAct" id="Q09924">
    <property type="interactions" value="3"/>
</dbReference>
<dbReference type="STRING" id="284812.Q09924"/>
<dbReference type="iPTMnet" id="Q09924"/>
<dbReference type="PaxDb" id="4896-SPAC21E11.06.1"/>
<dbReference type="EnsemblFungi" id="SPAC21E11.06.1">
    <property type="protein sequence ID" value="SPAC21E11.06.1:pep"/>
    <property type="gene ID" value="SPAC21E11.06"/>
</dbReference>
<dbReference type="GeneID" id="2542064"/>
<dbReference type="KEGG" id="spo:2542064"/>
<dbReference type="PomBase" id="SPAC21E11.06">
    <property type="gene designation" value="tif224"/>
</dbReference>
<dbReference type="VEuPathDB" id="FungiDB:SPAC21E11.06"/>
<dbReference type="eggNOG" id="KOG1467">
    <property type="taxonomic scope" value="Eukaryota"/>
</dbReference>
<dbReference type="HOGENOM" id="CLU_016218_3_0_1"/>
<dbReference type="InParanoid" id="Q09924"/>
<dbReference type="OMA" id="MRDYVIC"/>
<dbReference type="PhylomeDB" id="Q09924"/>
<dbReference type="Reactome" id="R-SPO-72731">
    <property type="pathway name" value="Recycling of eIF2:GDP"/>
</dbReference>
<dbReference type="PRO" id="PR:Q09924"/>
<dbReference type="Proteomes" id="UP000002485">
    <property type="component" value="Chromosome I"/>
</dbReference>
<dbReference type="GO" id="GO:0005829">
    <property type="term" value="C:cytosol"/>
    <property type="evidence" value="ECO:0007005"/>
    <property type="project" value="PomBase"/>
</dbReference>
<dbReference type="GO" id="GO:0005851">
    <property type="term" value="C:eukaryotic translation initiation factor 2B complex"/>
    <property type="evidence" value="ECO:0000314"/>
    <property type="project" value="PomBase"/>
</dbReference>
<dbReference type="GO" id="GO:0005085">
    <property type="term" value="F:guanyl-nucleotide exchange factor activity"/>
    <property type="evidence" value="ECO:0000314"/>
    <property type="project" value="PomBase"/>
</dbReference>
<dbReference type="GO" id="GO:0003743">
    <property type="term" value="F:translation initiation factor activity"/>
    <property type="evidence" value="ECO:0000314"/>
    <property type="project" value="PomBase"/>
</dbReference>
<dbReference type="GO" id="GO:0002183">
    <property type="term" value="P:cytoplasmic translational initiation"/>
    <property type="evidence" value="ECO:0000314"/>
    <property type="project" value="PomBase"/>
</dbReference>
<dbReference type="Gene3D" id="3.40.50.10470">
    <property type="entry name" value="Translation initiation factor eif-2b, domain 2"/>
    <property type="match status" value="1"/>
</dbReference>
<dbReference type="InterPro" id="IPR000649">
    <property type="entry name" value="IF-2B-related"/>
</dbReference>
<dbReference type="InterPro" id="IPR042529">
    <property type="entry name" value="IF_2B-like_C"/>
</dbReference>
<dbReference type="InterPro" id="IPR037171">
    <property type="entry name" value="NagB/RpiA_transferase-like"/>
</dbReference>
<dbReference type="PANTHER" id="PTHR10233">
    <property type="entry name" value="TRANSLATION INITIATION FACTOR EIF-2B"/>
    <property type="match status" value="1"/>
</dbReference>
<dbReference type="PANTHER" id="PTHR10233:SF14">
    <property type="entry name" value="TRANSLATION INITIATION FACTOR EIF-2B SUBUNIT DELTA"/>
    <property type="match status" value="1"/>
</dbReference>
<dbReference type="Pfam" id="PF01008">
    <property type="entry name" value="IF-2B"/>
    <property type="match status" value="1"/>
</dbReference>
<dbReference type="SUPFAM" id="SSF100950">
    <property type="entry name" value="NagB/RpiA/CoA transferase-like"/>
    <property type="match status" value="1"/>
</dbReference>
<gene>
    <name type="primary">tif224</name>
    <name type="ORF">SPAC21E11.06</name>
</gene>
<protein>
    <recommendedName>
        <fullName>Translation initiation factor eIF2B subunit delta</fullName>
    </recommendedName>
    <alternativeName>
        <fullName>eIF2B GDP-GTP exchange factor subunit delta</fullName>
    </alternativeName>
</protein>
<accession>Q09924</accession>
<proteinExistence type="evidence at protein level"/>
<keyword id="KW-0002">3D-structure</keyword>
<keyword id="KW-0963">Cytoplasm</keyword>
<keyword id="KW-0396">Initiation factor</keyword>
<keyword id="KW-0597">Phosphoprotein</keyword>
<keyword id="KW-0648">Protein biosynthesis</keyword>
<keyword id="KW-1185">Reference proteome</keyword>
<sequence length="467" mass="51583">MGFSAEQAKKDGKDQSPVSESSSVGGTSPATASSVVSPNEPKLSGKEAKALKKARKQASRRAKAEAAAANNPPGVSEEKKVAIPNKNSNQQKKASKQNPQNSPETDANLQEKKIFEEKQVSIFSHLDWRRRRTTENIPKDIHPAVIRLGLKLANYKIFGSNQRCIDLLKTFKIVIQDYQTPYGTTLSRHLTTHINSQIAYLVSTRPLSISMGNAIRFLKLEISVLDIDLTDDEGKELLLEKIDSYIRDRIIIAGQVIVQAATEKIQDGDVILTYLHSSTVNDVLIHAKNVGKKFRVVVVDSRPEFEGRVCLKLLTEHGIECTYVMISALSYIMQEVTKIFLGGHAMLSNGALYSRAGTSLISLLGHESNVPVIACCESYKFTERIQLDSLVYNELAPGDQLVNMGVDDFEEKPGVLANWKSVKNLKLLSLKYDVTPPRLITVCVCEMGLLPSTSVPAIINEFKQVYA</sequence>
<evidence type="ECO:0000256" key="1">
    <source>
        <dbReference type="SAM" id="MobiDB-lite"/>
    </source>
</evidence>
<evidence type="ECO:0000269" key="2">
    <source>
    </source>
</evidence>
<evidence type="ECO:0000269" key="3">
    <source>
    </source>
</evidence>
<evidence type="ECO:0000269" key="4">
    <source>
    </source>
</evidence>
<evidence type="ECO:0000269" key="5">
    <source>
    </source>
</evidence>
<evidence type="ECO:0000269" key="6">
    <source>
    </source>
</evidence>
<evidence type="ECO:0000305" key="7"/>
<evidence type="ECO:0007744" key="8">
    <source>
        <dbReference type="PDB" id="5B04"/>
    </source>
</evidence>
<evidence type="ECO:0007744" key="9">
    <source>
        <dbReference type="PDB" id="6JLY"/>
    </source>
</evidence>
<evidence type="ECO:0007744" key="10">
    <source>
        <dbReference type="PDB" id="6JLZ"/>
    </source>
</evidence>
<evidence type="ECO:0007829" key="11">
    <source>
        <dbReference type="PDB" id="5B04"/>
    </source>
</evidence>
<evidence type="ECO:0007829" key="12">
    <source>
        <dbReference type="PDB" id="6JLY"/>
    </source>
</evidence>
<evidence type="ECO:0007829" key="13">
    <source>
        <dbReference type="PDB" id="6JLZ"/>
    </source>
</evidence>
<feature type="chain" id="PRO_0000156071" description="Translation initiation factor eIF2B subunit delta">
    <location>
        <begin position="1"/>
        <end position="467"/>
    </location>
</feature>
<feature type="region of interest" description="Disordered" evidence="1">
    <location>
        <begin position="1"/>
        <end position="106"/>
    </location>
</feature>
<feature type="compositionally biased region" description="Polar residues" evidence="1">
    <location>
        <begin position="16"/>
        <end position="37"/>
    </location>
</feature>
<feature type="compositionally biased region" description="Basic residues" evidence="1">
    <location>
        <begin position="51"/>
        <end position="61"/>
    </location>
</feature>
<feature type="compositionally biased region" description="Low complexity" evidence="1">
    <location>
        <begin position="84"/>
        <end position="102"/>
    </location>
</feature>
<feature type="modified residue" description="Phosphoserine" evidence="3">
    <location>
        <position position="16"/>
    </location>
</feature>
<feature type="modified residue" description="Phosphoserine" evidence="3">
    <location>
        <position position="19"/>
    </location>
</feature>
<feature type="modified residue" description="Phosphoserine" evidence="3">
    <location>
        <position position="21"/>
    </location>
</feature>
<feature type="modified residue" description="Phosphoserine" evidence="3">
    <location>
        <position position="23"/>
    </location>
</feature>
<feature type="modified residue" description="Phosphothreonine" evidence="3">
    <location>
        <position position="27"/>
    </location>
</feature>
<feature type="modified residue" description="Phosphoserine" evidence="3">
    <location>
        <position position="28"/>
    </location>
</feature>
<feature type="modified residue" description="Phosphoserine" evidence="3">
    <location>
        <position position="37"/>
    </location>
</feature>
<feature type="mutagenesis site" description="Increases guanyl-nucleotide exchange factor activity on eIF2." evidence="4">
    <original>D</original>
    <variation>K</variation>
    <location>
        <position position="248"/>
    </location>
</feature>
<feature type="helix" evidence="13">
    <location>
        <begin position="107"/>
        <end position="116"/>
    </location>
</feature>
<feature type="strand" evidence="13">
    <location>
        <begin position="119"/>
        <end position="121"/>
    </location>
</feature>
<feature type="turn" evidence="11">
    <location>
        <begin position="122"/>
        <end position="125"/>
    </location>
</feature>
<feature type="helix" evidence="11">
    <location>
        <begin position="143"/>
        <end position="154"/>
    </location>
</feature>
<feature type="helix" evidence="11">
    <location>
        <begin position="160"/>
        <end position="177"/>
    </location>
</feature>
<feature type="strand" evidence="12">
    <location>
        <begin position="182"/>
        <end position="184"/>
    </location>
</feature>
<feature type="helix" evidence="11">
    <location>
        <begin position="186"/>
        <end position="204"/>
    </location>
</feature>
<feature type="helix" evidence="11">
    <location>
        <begin position="209"/>
        <end position="224"/>
    </location>
</feature>
<feature type="helix" evidence="11">
    <location>
        <begin position="231"/>
        <end position="248"/>
    </location>
</feature>
<feature type="helix" evidence="11">
    <location>
        <begin position="251"/>
        <end position="262"/>
    </location>
</feature>
<feature type="strand" evidence="11">
    <location>
        <begin position="269"/>
        <end position="275"/>
    </location>
</feature>
<feature type="helix" evidence="11">
    <location>
        <begin position="278"/>
        <end position="289"/>
    </location>
</feature>
<feature type="strand" evidence="11">
    <location>
        <begin position="294"/>
        <end position="300"/>
    </location>
</feature>
<feature type="strand" evidence="11">
    <location>
        <begin position="302"/>
        <end position="304"/>
    </location>
</feature>
<feature type="helix" evidence="11">
    <location>
        <begin position="306"/>
        <end position="316"/>
    </location>
</feature>
<feature type="strand" evidence="11">
    <location>
        <begin position="320"/>
        <end position="325"/>
    </location>
</feature>
<feature type="helix" evidence="11">
    <location>
        <begin position="326"/>
        <end position="328"/>
    </location>
</feature>
<feature type="helix" evidence="11">
    <location>
        <begin position="329"/>
        <end position="333"/>
    </location>
</feature>
<feature type="strand" evidence="11">
    <location>
        <begin position="337"/>
        <end position="342"/>
    </location>
</feature>
<feature type="strand" evidence="11">
    <location>
        <begin position="344"/>
        <end position="346"/>
    </location>
</feature>
<feature type="strand" evidence="11">
    <location>
        <begin position="352"/>
        <end position="355"/>
    </location>
</feature>
<feature type="helix" evidence="11">
    <location>
        <begin position="358"/>
        <end position="367"/>
    </location>
</feature>
<feature type="strand" evidence="11">
    <location>
        <begin position="372"/>
        <end position="375"/>
    </location>
</feature>
<feature type="helix" evidence="11">
    <location>
        <begin position="378"/>
        <end position="380"/>
    </location>
</feature>
<feature type="strand" evidence="11">
    <location>
        <begin position="387"/>
        <end position="392"/>
    </location>
</feature>
<feature type="helix" evidence="11">
    <location>
        <begin position="398"/>
        <end position="401"/>
    </location>
</feature>
<feature type="strand" evidence="11">
    <location>
        <begin position="405"/>
        <end position="410"/>
    </location>
</feature>
<feature type="turn" evidence="11">
    <location>
        <begin position="415"/>
        <end position="421"/>
    </location>
</feature>
<feature type="strand" evidence="11">
    <location>
        <begin position="425"/>
        <end position="430"/>
    </location>
</feature>
<feature type="strand" evidence="11">
    <location>
        <begin position="432"/>
        <end position="435"/>
    </location>
</feature>
<feature type="helix" evidence="11">
    <location>
        <begin position="437"/>
        <end position="439"/>
    </location>
</feature>
<feature type="strand" evidence="11">
    <location>
        <begin position="442"/>
        <end position="445"/>
    </location>
</feature>
<feature type="strand" evidence="11">
    <location>
        <begin position="448"/>
        <end position="450"/>
    </location>
</feature>
<feature type="helix" evidence="11">
    <location>
        <begin position="452"/>
        <end position="454"/>
    </location>
</feature>
<feature type="helix" evidence="11">
    <location>
        <begin position="455"/>
        <end position="461"/>
    </location>
</feature>
<organism>
    <name type="scientific">Schizosaccharomyces pombe (strain 972 / ATCC 24843)</name>
    <name type="common">Fission yeast</name>
    <dbReference type="NCBI Taxonomy" id="284812"/>
    <lineage>
        <taxon>Eukaryota</taxon>
        <taxon>Fungi</taxon>
        <taxon>Dikarya</taxon>
        <taxon>Ascomycota</taxon>
        <taxon>Taphrinomycotina</taxon>
        <taxon>Schizosaccharomycetes</taxon>
        <taxon>Schizosaccharomycetales</taxon>
        <taxon>Schizosaccharomycetaceae</taxon>
        <taxon>Schizosaccharomyces</taxon>
    </lineage>
</organism>
<comment type="function">
    <text evidence="4 5 6">Acts as a component of the translation initiation factor 2B (eIF2B) complex, which catalyzes the exchange of GDP for GTP on the eukaryotic initiation factor 2 (eIF2) complex gamma subunit (PubMed:26901872, PubMed:27023709, PubMed:31048492). Its guanine nucleotide exchange factor activity is repressed when bound to eIF2 complex phosphorylated on the alpha subunit, thereby limiting the amount of methionyl-initiator methionine tRNA available to the ribosome and consequently global translation is repressed (PubMed:26901872, PubMed:31048492).</text>
</comment>
<comment type="subunit">
    <text evidence="4 5 6">Component of the translation initiation factor 2B (eIF2B) complex which is a heterodecamer of two sets of five different subunits: alpha, beta, gamma, delta and epsilon. Subunits alpha, beta and delta comprise a regulatory subcomplex and subunits epsilon and gamma comprise a catalytic subcomplex (PubMed:26901872, PubMed:27023709, PubMed:31048492). Within the complex, the hexameric regulatory complex resides at the center, with the two heterodimeric catalytic subcomplexes bound on opposite sides (PubMed:26901872, PubMed:31048492).</text>
</comment>
<comment type="subcellular location">
    <subcellularLocation>
        <location evidence="2">Cytoplasm</location>
        <location evidence="2">Cytosol</location>
    </subcellularLocation>
</comment>
<comment type="similarity">
    <text evidence="7">Belongs to the eIF-2B alpha/beta/delta subunits family.</text>
</comment>
<reference key="1">
    <citation type="journal article" date="2002" name="Nature">
        <title>The genome sequence of Schizosaccharomyces pombe.</title>
        <authorList>
            <person name="Wood V."/>
            <person name="Gwilliam R."/>
            <person name="Rajandream M.A."/>
            <person name="Lyne M.H."/>
            <person name="Lyne R."/>
            <person name="Stewart A."/>
            <person name="Sgouros J.G."/>
            <person name="Peat N."/>
            <person name="Hayles J."/>
            <person name="Baker S.G."/>
            <person name="Basham D."/>
            <person name="Bowman S."/>
            <person name="Brooks K."/>
            <person name="Brown D."/>
            <person name="Brown S."/>
            <person name="Chillingworth T."/>
            <person name="Churcher C.M."/>
            <person name="Collins M."/>
            <person name="Connor R."/>
            <person name="Cronin A."/>
            <person name="Davis P."/>
            <person name="Feltwell T."/>
            <person name="Fraser A."/>
            <person name="Gentles S."/>
            <person name="Goble A."/>
            <person name="Hamlin N."/>
            <person name="Harris D.E."/>
            <person name="Hidalgo J."/>
            <person name="Hodgson G."/>
            <person name="Holroyd S."/>
            <person name="Hornsby T."/>
            <person name="Howarth S."/>
            <person name="Huckle E.J."/>
            <person name="Hunt S."/>
            <person name="Jagels K."/>
            <person name="James K.D."/>
            <person name="Jones L."/>
            <person name="Jones M."/>
            <person name="Leather S."/>
            <person name="McDonald S."/>
            <person name="McLean J."/>
            <person name="Mooney P."/>
            <person name="Moule S."/>
            <person name="Mungall K.L."/>
            <person name="Murphy L.D."/>
            <person name="Niblett D."/>
            <person name="Odell C."/>
            <person name="Oliver K."/>
            <person name="O'Neil S."/>
            <person name="Pearson D."/>
            <person name="Quail M.A."/>
            <person name="Rabbinowitsch E."/>
            <person name="Rutherford K.M."/>
            <person name="Rutter S."/>
            <person name="Saunders D."/>
            <person name="Seeger K."/>
            <person name="Sharp S."/>
            <person name="Skelton J."/>
            <person name="Simmonds M.N."/>
            <person name="Squares R."/>
            <person name="Squares S."/>
            <person name="Stevens K."/>
            <person name="Taylor K."/>
            <person name="Taylor R.G."/>
            <person name="Tivey A."/>
            <person name="Walsh S.V."/>
            <person name="Warren T."/>
            <person name="Whitehead S."/>
            <person name="Woodward J.R."/>
            <person name="Volckaert G."/>
            <person name="Aert R."/>
            <person name="Robben J."/>
            <person name="Grymonprez B."/>
            <person name="Weltjens I."/>
            <person name="Vanstreels E."/>
            <person name="Rieger M."/>
            <person name="Schaefer M."/>
            <person name="Mueller-Auer S."/>
            <person name="Gabel C."/>
            <person name="Fuchs M."/>
            <person name="Duesterhoeft A."/>
            <person name="Fritzc C."/>
            <person name="Holzer E."/>
            <person name="Moestl D."/>
            <person name="Hilbert H."/>
            <person name="Borzym K."/>
            <person name="Langer I."/>
            <person name="Beck A."/>
            <person name="Lehrach H."/>
            <person name="Reinhardt R."/>
            <person name="Pohl T.M."/>
            <person name="Eger P."/>
            <person name="Zimmermann W."/>
            <person name="Wedler H."/>
            <person name="Wambutt R."/>
            <person name="Purnelle B."/>
            <person name="Goffeau A."/>
            <person name="Cadieu E."/>
            <person name="Dreano S."/>
            <person name="Gloux S."/>
            <person name="Lelaure V."/>
            <person name="Mottier S."/>
            <person name="Galibert F."/>
            <person name="Aves S.J."/>
            <person name="Xiang Z."/>
            <person name="Hunt C."/>
            <person name="Moore K."/>
            <person name="Hurst S.M."/>
            <person name="Lucas M."/>
            <person name="Rochet M."/>
            <person name="Gaillardin C."/>
            <person name="Tallada V.A."/>
            <person name="Garzon A."/>
            <person name="Thode G."/>
            <person name="Daga R.R."/>
            <person name="Cruzado L."/>
            <person name="Jimenez J."/>
            <person name="Sanchez M."/>
            <person name="del Rey F."/>
            <person name="Benito J."/>
            <person name="Dominguez A."/>
            <person name="Revuelta J.L."/>
            <person name="Moreno S."/>
            <person name="Armstrong J."/>
            <person name="Forsburg S.L."/>
            <person name="Cerutti L."/>
            <person name="Lowe T."/>
            <person name="McCombie W.R."/>
            <person name="Paulsen I."/>
            <person name="Potashkin J."/>
            <person name="Shpakovski G.V."/>
            <person name="Ussery D."/>
            <person name="Barrell B.G."/>
            <person name="Nurse P."/>
        </authorList>
    </citation>
    <scope>NUCLEOTIDE SEQUENCE [LARGE SCALE GENOMIC DNA]</scope>
    <source>
        <strain>972 / ATCC 24843</strain>
    </source>
</reference>
<reference key="2">
    <citation type="journal article" date="2006" name="Nat. Biotechnol.">
        <title>ORFeome cloning and global analysis of protein localization in the fission yeast Schizosaccharomyces pombe.</title>
        <authorList>
            <person name="Matsuyama A."/>
            <person name="Arai R."/>
            <person name="Yashiroda Y."/>
            <person name="Shirai A."/>
            <person name="Kamata A."/>
            <person name="Sekido S."/>
            <person name="Kobayashi Y."/>
            <person name="Hashimoto A."/>
            <person name="Hamamoto M."/>
            <person name="Hiraoka Y."/>
            <person name="Horinouchi S."/>
            <person name="Yoshida M."/>
        </authorList>
    </citation>
    <scope>SUBCELLULAR LOCATION [LARGE SCALE ANALYSIS]</scope>
</reference>
<reference key="3">
    <citation type="journal article" date="2008" name="J. Proteome Res.">
        <title>Phosphoproteome analysis of fission yeast.</title>
        <authorList>
            <person name="Wilson-Grady J.T."/>
            <person name="Villen J."/>
            <person name="Gygi S.P."/>
        </authorList>
    </citation>
    <scope>PHOSPHORYLATION [LARGE SCALE ANALYSIS] AT SER-16; SER-19; SER-21; SER-23; THR-27; SER-28 AND SER-37</scope>
    <scope>IDENTIFICATION BY MASS SPECTROMETRY</scope>
</reference>
<reference key="4">
    <citation type="journal article" date="2016" name="J. Struct. Funct. Genomics">
        <title>Expression, purification, and crystallization of Schizosaccharomyces pombe eIF2B.</title>
        <authorList>
            <person name="Kashiwagi K."/>
            <person name="Shigeta T."/>
            <person name="Imataka H."/>
            <person name="Ito T."/>
            <person name="Yokoyama S."/>
        </authorList>
    </citation>
    <scope>FUNCTION</scope>
    <scope>SUBUNIT</scope>
    <scope>IDENTIFICATION IN THE EIF2B COMPLEX</scope>
</reference>
<reference evidence="8" key="5">
    <citation type="journal article" date="2016" name="Nature">
        <title>Crystal structure of eukaryotic translation initiation factor 2B.</title>
        <authorList>
            <person name="Kashiwagi K."/>
            <person name="Takahashi M."/>
            <person name="Nishimoto M."/>
            <person name="Hiyama T.B."/>
            <person name="Higo T."/>
            <person name="Umehara T."/>
            <person name="Sakamoto K."/>
            <person name="Ito T."/>
            <person name="Yokoyama S."/>
        </authorList>
    </citation>
    <scope>X-RAY CRYSTALLOGRAPHY (2.99 ANGSTROMS)</scope>
    <scope>FUNCTION</scope>
    <scope>SUBUNIT</scope>
    <scope>IDENTIFICATION IN THE EIF2B COMPLEX</scope>
    <scope>MUTAGENESIS OF ASP-248</scope>
</reference>
<reference evidence="9 10" key="6">
    <citation type="journal article" date="2019" name="Science">
        <title>Structural basis for eIF2B inhibition in integrated stress response.</title>
        <authorList>
            <person name="Kashiwagi K."/>
            <person name="Yokoyama T."/>
            <person name="Nishimoto M."/>
            <person name="Takahashi M."/>
            <person name="Sakamoto A."/>
            <person name="Yonemochi M."/>
            <person name="Shirouzu M."/>
            <person name="Ito T."/>
        </authorList>
    </citation>
    <scope>X-RAY CRYSTALLOGRAPHY (3.35 ANGSTROMS) IN COMPLEX WITH S.CEREVISIAE SUI2</scope>
    <scope>FUNCTION</scope>
</reference>
<name>EI2BD_SCHPO</name>